<feature type="chain" id="PRO_0000112172" description="ATP synthase subunit c">
    <location>
        <begin position="1"/>
        <end position="81"/>
    </location>
</feature>
<feature type="transmembrane region" description="Helical" evidence="1">
    <location>
        <begin position="7"/>
        <end position="27"/>
    </location>
</feature>
<feature type="transmembrane region" description="Helical" evidence="1">
    <location>
        <begin position="57"/>
        <end position="77"/>
    </location>
</feature>
<feature type="site" description="Reversibly protonated during proton transport" evidence="1">
    <location>
        <position position="61"/>
    </location>
</feature>
<evidence type="ECO:0000255" key="1">
    <source>
        <dbReference type="HAMAP-Rule" id="MF_01396"/>
    </source>
</evidence>
<organism>
    <name type="scientific">Synechococcus sp. (strain ATCC 27144 / PCC 6301 / SAUG 1402/1)</name>
    <name type="common">Anacystis nidulans</name>
    <dbReference type="NCBI Taxonomy" id="269084"/>
    <lineage>
        <taxon>Bacteria</taxon>
        <taxon>Bacillati</taxon>
        <taxon>Cyanobacteriota</taxon>
        <taxon>Cyanophyceae</taxon>
        <taxon>Synechococcales</taxon>
        <taxon>Synechococcaceae</taxon>
        <taxon>Synechococcus</taxon>
    </lineage>
</organism>
<comment type="function">
    <text evidence="1">F(1)F(0) ATP synthase produces ATP from ADP in the presence of a proton or sodium gradient. F-type ATPases consist of two structural domains, F(1) containing the extramembraneous catalytic core and F(0) containing the membrane proton channel, linked together by a central stalk and a peripheral stalk. During catalysis, ATP synthesis in the catalytic domain of F(1) is coupled via a rotary mechanism of the central stalk subunits to proton translocation.</text>
</comment>
<comment type="function">
    <text evidence="1">Key component of the F(0) channel; it plays a direct role in translocation across the membrane. A homomeric c-ring of between 10-14 subunits forms the central stalk rotor element with the F(1) delta and epsilon subunits.</text>
</comment>
<comment type="subunit">
    <text evidence="1">F-type ATPases have 2 components, F(1) - the catalytic core - and F(0) - the membrane proton channel. F(1) has five subunits: alpha(3), beta(3), gamma(1), delta(1), epsilon(1). F(0) has four main subunits: a(1), b(1), b'(1) and c(10-14). The alpha and beta chains form an alternating ring which encloses part of the gamma chain. F(1) is attached to F(0) by a central stalk formed by the gamma and epsilon chains, while a peripheral stalk is formed by the delta, b and b' chains.</text>
</comment>
<comment type="subcellular location">
    <subcellularLocation>
        <location evidence="1">Cellular thylakoid membrane</location>
        <topology evidence="1">Multi-pass membrane protein</topology>
    </subcellularLocation>
</comment>
<comment type="similarity">
    <text evidence="1">Belongs to the ATPase C chain family.</text>
</comment>
<reference key="1">
    <citation type="journal article" date="1987" name="J. Mol. Biol.">
        <title>The organization and sequence of the genes for ATP synthase subunits in the cyanobacterium Synechococcus 6301. Support for an endosymbiotic origin of chloroplasts.</title>
        <authorList>
            <person name="Cozens A.L."/>
            <person name="Walker J.E."/>
        </authorList>
    </citation>
    <scope>NUCLEOTIDE SEQUENCE [GENOMIC DNA]</scope>
</reference>
<reference key="2">
    <citation type="journal article" date="2007" name="Photosyn. Res.">
        <title>Complete nucleotide sequence of the freshwater unicellular cyanobacterium Synechococcus elongatus PCC 6301 chromosome: gene content and organization.</title>
        <authorList>
            <person name="Sugita C."/>
            <person name="Ogata K."/>
            <person name="Shikata M."/>
            <person name="Jikuya H."/>
            <person name="Takano J."/>
            <person name="Furumichi M."/>
            <person name="Kanehisa M."/>
            <person name="Omata T."/>
            <person name="Sugiura M."/>
            <person name="Sugita M."/>
        </authorList>
    </citation>
    <scope>NUCLEOTIDE SEQUENCE [LARGE SCALE GENOMIC DNA]</scope>
    <source>
        <strain>ATCC 27144 / PCC 6301 / SAUG 1402/1</strain>
    </source>
</reference>
<gene>
    <name evidence="1" type="primary">atpE</name>
    <name evidence="1" type="synonym">atpH</name>
    <name type="ordered locus">syc1181_c</name>
</gene>
<protein>
    <recommendedName>
        <fullName evidence="1">ATP synthase subunit c</fullName>
    </recommendedName>
    <alternativeName>
        <fullName evidence="1">ATP synthase F(0) sector subunit c</fullName>
    </alternativeName>
    <alternativeName>
        <fullName evidence="1">F-type ATPase subunit c</fullName>
        <shortName evidence="1">F-ATPase subunit c</shortName>
    </alternativeName>
    <alternativeName>
        <fullName evidence="1">Lipid-binding protein</fullName>
    </alternativeName>
</protein>
<keyword id="KW-0066">ATP synthesis</keyword>
<keyword id="KW-0138">CF(0)</keyword>
<keyword id="KW-0375">Hydrogen ion transport</keyword>
<keyword id="KW-0406">Ion transport</keyword>
<keyword id="KW-0446">Lipid-binding</keyword>
<keyword id="KW-0472">Membrane</keyword>
<keyword id="KW-0793">Thylakoid</keyword>
<keyword id="KW-0812">Transmembrane</keyword>
<keyword id="KW-1133">Transmembrane helix</keyword>
<keyword id="KW-0813">Transport</keyword>
<proteinExistence type="inferred from homology"/>
<dbReference type="EMBL" id="X05302">
    <property type="protein sequence ID" value="CAA28924.1"/>
    <property type="molecule type" value="Genomic_DNA"/>
</dbReference>
<dbReference type="EMBL" id="AP008231">
    <property type="protein sequence ID" value="BAD79371.1"/>
    <property type="molecule type" value="Genomic_DNA"/>
</dbReference>
<dbReference type="PIR" id="S10827">
    <property type="entry name" value="LWYCA"/>
</dbReference>
<dbReference type="RefSeq" id="WP_011243493.1">
    <property type="nucleotide sequence ID" value="NZ_CP085785.1"/>
</dbReference>
<dbReference type="SMR" id="P08445"/>
<dbReference type="GeneID" id="72429148"/>
<dbReference type="KEGG" id="syc:syc1181_c"/>
<dbReference type="eggNOG" id="COG0636">
    <property type="taxonomic scope" value="Bacteria"/>
</dbReference>
<dbReference type="Proteomes" id="UP000001175">
    <property type="component" value="Chromosome"/>
</dbReference>
<dbReference type="GO" id="GO:0031676">
    <property type="term" value="C:plasma membrane-derived thylakoid membrane"/>
    <property type="evidence" value="ECO:0007669"/>
    <property type="project" value="UniProtKB-SubCell"/>
</dbReference>
<dbReference type="GO" id="GO:0045259">
    <property type="term" value="C:proton-transporting ATP synthase complex"/>
    <property type="evidence" value="ECO:0007669"/>
    <property type="project" value="UniProtKB-KW"/>
</dbReference>
<dbReference type="GO" id="GO:0033177">
    <property type="term" value="C:proton-transporting two-sector ATPase complex, proton-transporting domain"/>
    <property type="evidence" value="ECO:0007669"/>
    <property type="project" value="InterPro"/>
</dbReference>
<dbReference type="GO" id="GO:0008289">
    <property type="term" value="F:lipid binding"/>
    <property type="evidence" value="ECO:0007669"/>
    <property type="project" value="UniProtKB-KW"/>
</dbReference>
<dbReference type="GO" id="GO:0046933">
    <property type="term" value="F:proton-transporting ATP synthase activity, rotational mechanism"/>
    <property type="evidence" value="ECO:0007669"/>
    <property type="project" value="UniProtKB-UniRule"/>
</dbReference>
<dbReference type="CDD" id="cd18183">
    <property type="entry name" value="ATP-synt_Fo_c_ATPH"/>
    <property type="match status" value="1"/>
</dbReference>
<dbReference type="FunFam" id="1.20.20.10:FF:000001">
    <property type="entry name" value="ATP synthase subunit c, chloroplastic"/>
    <property type="match status" value="1"/>
</dbReference>
<dbReference type="Gene3D" id="1.20.20.10">
    <property type="entry name" value="F1F0 ATP synthase subunit C"/>
    <property type="match status" value="1"/>
</dbReference>
<dbReference type="HAMAP" id="MF_01396">
    <property type="entry name" value="ATP_synth_c_bact"/>
    <property type="match status" value="1"/>
</dbReference>
<dbReference type="InterPro" id="IPR005953">
    <property type="entry name" value="ATP_synth_csu_bac/chlpt"/>
</dbReference>
<dbReference type="InterPro" id="IPR000454">
    <property type="entry name" value="ATP_synth_F0_csu"/>
</dbReference>
<dbReference type="InterPro" id="IPR020537">
    <property type="entry name" value="ATP_synth_F0_csu_DDCD_BS"/>
</dbReference>
<dbReference type="InterPro" id="IPR038662">
    <property type="entry name" value="ATP_synth_F0_csu_sf"/>
</dbReference>
<dbReference type="InterPro" id="IPR002379">
    <property type="entry name" value="ATPase_proteolipid_c-like_dom"/>
</dbReference>
<dbReference type="InterPro" id="IPR035921">
    <property type="entry name" value="F/V-ATP_Csub_sf"/>
</dbReference>
<dbReference type="NCBIfam" id="TIGR01260">
    <property type="entry name" value="ATP_synt_c"/>
    <property type="match status" value="1"/>
</dbReference>
<dbReference type="NCBIfam" id="NF005608">
    <property type="entry name" value="PRK07354.1"/>
    <property type="match status" value="1"/>
</dbReference>
<dbReference type="PANTHER" id="PTHR10031">
    <property type="entry name" value="ATP SYNTHASE LIPID-BINDING PROTEIN, MITOCHONDRIAL"/>
    <property type="match status" value="1"/>
</dbReference>
<dbReference type="PANTHER" id="PTHR10031:SF0">
    <property type="entry name" value="ATPASE PROTEIN 9"/>
    <property type="match status" value="1"/>
</dbReference>
<dbReference type="Pfam" id="PF00137">
    <property type="entry name" value="ATP-synt_C"/>
    <property type="match status" value="1"/>
</dbReference>
<dbReference type="PRINTS" id="PR00124">
    <property type="entry name" value="ATPASEC"/>
</dbReference>
<dbReference type="SUPFAM" id="SSF81333">
    <property type="entry name" value="F1F0 ATP synthase subunit C"/>
    <property type="match status" value="1"/>
</dbReference>
<dbReference type="PROSITE" id="PS00605">
    <property type="entry name" value="ATPASE_C"/>
    <property type="match status" value="1"/>
</dbReference>
<accession>P08445</accession>
<sequence>MDSLTSAASVLAAALAVGLAAIGPGIGQGSAAGQAVEGIARQPEAEGKIRGTLLLSLAFMEALTIYGLVVALVLLFANPFA</sequence>
<name>ATPL_SYNP6</name>